<comment type="function">
    <text evidence="1">Required for the formation of a threonylcarbamoyl group on adenosine at position 37 (t(6)A37) in tRNAs that read codons beginning with adenine. Is involved in the transfer of the threonylcarbamoyl moiety of threonylcarbamoyl-AMP (TC-AMP) to the N6 group of A37, together with TsaE and TsaB. TsaD likely plays a direct catalytic role in this reaction.</text>
</comment>
<comment type="catalytic activity">
    <reaction evidence="1">
        <text>L-threonylcarbamoyladenylate + adenosine(37) in tRNA = N(6)-L-threonylcarbamoyladenosine(37) in tRNA + AMP + H(+)</text>
        <dbReference type="Rhea" id="RHEA:37059"/>
        <dbReference type="Rhea" id="RHEA-COMP:10162"/>
        <dbReference type="Rhea" id="RHEA-COMP:10163"/>
        <dbReference type="ChEBI" id="CHEBI:15378"/>
        <dbReference type="ChEBI" id="CHEBI:73682"/>
        <dbReference type="ChEBI" id="CHEBI:74411"/>
        <dbReference type="ChEBI" id="CHEBI:74418"/>
        <dbReference type="ChEBI" id="CHEBI:456215"/>
        <dbReference type="EC" id="2.3.1.234"/>
    </reaction>
</comment>
<comment type="cofactor">
    <cofactor evidence="1">
        <name>Fe(2+)</name>
        <dbReference type="ChEBI" id="CHEBI:29033"/>
    </cofactor>
    <text evidence="1">Binds 1 Fe(2+) ion per subunit.</text>
</comment>
<comment type="subcellular location">
    <subcellularLocation>
        <location evidence="1">Cytoplasm</location>
    </subcellularLocation>
</comment>
<comment type="similarity">
    <text evidence="1">Belongs to the KAE1 / TsaD family.</text>
</comment>
<evidence type="ECO:0000255" key="1">
    <source>
        <dbReference type="HAMAP-Rule" id="MF_01445"/>
    </source>
</evidence>
<feature type="chain" id="PRO_1000184960" description="tRNA N6-adenosine threonylcarbamoyltransferase">
    <location>
        <begin position="1"/>
        <end position="346"/>
    </location>
</feature>
<feature type="binding site" evidence="1">
    <location>
        <position position="111"/>
    </location>
    <ligand>
        <name>Fe cation</name>
        <dbReference type="ChEBI" id="CHEBI:24875"/>
    </ligand>
</feature>
<feature type="binding site" evidence="1">
    <location>
        <position position="115"/>
    </location>
    <ligand>
        <name>Fe cation</name>
        <dbReference type="ChEBI" id="CHEBI:24875"/>
    </ligand>
</feature>
<feature type="binding site" evidence="1">
    <location>
        <begin position="134"/>
        <end position="138"/>
    </location>
    <ligand>
        <name>substrate</name>
    </ligand>
</feature>
<feature type="binding site" evidence="1">
    <location>
        <position position="167"/>
    </location>
    <ligand>
        <name>substrate</name>
    </ligand>
</feature>
<feature type="binding site" evidence="1">
    <location>
        <position position="180"/>
    </location>
    <ligand>
        <name>substrate</name>
    </ligand>
</feature>
<feature type="binding site" evidence="1">
    <location>
        <position position="184"/>
    </location>
    <ligand>
        <name>substrate</name>
    </ligand>
</feature>
<feature type="binding site" evidence="1">
    <location>
        <position position="280"/>
    </location>
    <ligand>
        <name>substrate</name>
    </ligand>
</feature>
<feature type="binding site" evidence="1">
    <location>
        <position position="308"/>
    </location>
    <ligand>
        <name>Fe cation</name>
        <dbReference type="ChEBI" id="CHEBI:24875"/>
    </ligand>
</feature>
<reference key="1">
    <citation type="journal article" date="2008" name="Proc. Natl. Acad. Sci. U.S.A.">
        <title>The genome of Cyanothece 51142, a unicellular diazotrophic cyanobacterium important in the marine nitrogen cycle.</title>
        <authorList>
            <person name="Welsh E.A."/>
            <person name="Liberton M."/>
            <person name="Stoeckel J."/>
            <person name="Loh T."/>
            <person name="Elvitigala T."/>
            <person name="Wang C."/>
            <person name="Wollam A."/>
            <person name="Fulton R.S."/>
            <person name="Clifton S.W."/>
            <person name="Jacobs J.M."/>
            <person name="Aurora R."/>
            <person name="Ghosh B.K."/>
            <person name="Sherman L.A."/>
            <person name="Smith R.D."/>
            <person name="Wilson R.K."/>
            <person name="Pakrasi H.B."/>
        </authorList>
    </citation>
    <scope>NUCLEOTIDE SEQUENCE [LARGE SCALE GENOMIC DNA]</scope>
    <source>
        <strain>ATCC 51142 / BH68</strain>
    </source>
</reference>
<dbReference type="EC" id="2.3.1.234" evidence="1"/>
<dbReference type="EMBL" id="CP000806">
    <property type="protein sequence ID" value="ACB49559.1"/>
    <property type="molecule type" value="Genomic_DNA"/>
</dbReference>
<dbReference type="RefSeq" id="WP_009546706.1">
    <property type="nucleotide sequence ID" value="NC_010546.1"/>
</dbReference>
<dbReference type="SMR" id="B1X058"/>
<dbReference type="STRING" id="43989.cce_0208"/>
<dbReference type="KEGG" id="cyt:cce_0208"/>
<dbReference type="eggNOG" id="COG0533">
    <property type="taxonomic scope" value="Bacteria"/>
</dbReference>
<dbReference type="HOGENOM" id="CLU_023208_0_2_3"/>
<dbReference type="OrthoDB" id="9806197at2"/>
<dbReference type="Proteomes" id="UP000001203">
    <property type="component" value="Chromosome circular"/>
</dbReference>
<dbReference type="GO" id="GO:0005737">
    <property type="term" value="C:cytoplasm"/>
    <property type="evidence" value="ECO:0007669"/>
    <property type="project" value="UniProtKB-SubCell"/>
</dbReference>
<dbReference type="GO" id="GO:0005506">
    <property type="term" value="F:iron ion binding"/>
    <property type="evidence" value="ECO:0007669"/>
    <property type="project" value="UniProtKB-UniRule"/>
</dbReference>
<dbReference type="GO" id="GO:0061711">
    <property type="term" value="F:N(6)-L-threonylcarbamoyladenine synthase activity"/>
    <property type="evidence" value="ECO:0007669"/>
    <property type="project" value="UniProtKB-EC"/>
</dbReference>
<dbReference type="GO" id="GO:0002949">
    <property type="term" value="P:tRNA threonylcarbamoyladenosine modification"/>
    <property type="evidence" value="ECO:0007669"/>
    <property type="project" value="UniProtKB-UniRule"/>
</dbReference>
<dbReference type="CDD" id="cd24133">
    <property type="entry name" value="ASKHA_NBD_TsaD_bac"/>
    <property type="match status" value="1"/>
</dbReference>
<dbReference type="FunFam" id="3.30.420.40:FF:000012">
    <property type="entry name" value="tRNA N6-adenosine threonylcarbamoyltransferase"/>
    <property type="match status" value="1"/>
</dbReference>
<dbReference type="FunFam" id="3.30.420.40:FF:000040">
    <property type="entry name" value="tRNA N6-adenosine threonylcarbamoyltransferase"/>
    <property type="match status" value="1"/>
</dbReference>
<dbReference type="Gene3D" id="3.30.420.40">
    <property type="match status" value="2"/>
</dbReference>
<dbReference type="HAMAP" id="MF_01445">
    <property type="entry name" value="TsaD"/>
    <property type="match status" value="1"/>
</dbReference>
<dbReference type="InterPro" id="IPR043129">
    <property type="entry name" value="ATPase_NBD"/>
</dbReference>
<dbReference type="InterPro" id="IPR000905">
    <property type="entry name" value="Gcp-like_dom"/>
</dbReference>
<dbReference type="InterPro" id="IPR017861">
    <property type="entry name" value="KAE1/TsaD"/>
</dbReference>
<dbReference type="InterPro" id="IPR017860">
    <property type="entry name" value="Peptidase_M22_CS"/>
</dbReference>
<dbReference type="InterPro" id="IPR022450">
    <property type="entry name" value="TsaD"/>
</dbReference>
<dbReference type="NCBIfam" id="TIGR00329">
    <property type="entry name" value="gcp_kae1"/>
    <property type="match status" value="1"/>
</dbReference>
<dbReference type="NCBIfam" id="TIGR03723">
    <property type="entry name" value="T6A_TsaD_YgjD"/>
    <property type="match status" value="1"/>
</dbReference>
<dbReference type="PANTHER" id="PTHR11735">
    <property type="entry name" value="TRNA N6-ADENOSINE THREONYLCARBAMOYLTRANSFERASE"/>
    <property type="match status" value="1"/>
</dbReference>
<dbReference type="PANTHER" id="PTHR11735:SF6">
    <property type="entry name" value="TRNA N6-ADENOSINE THREONYLCARBAMOYLTRANSFERASE, MITOCHONDRIAL"/>
    <property type="match status" value="1"/>
</dbReference>
<dbReference type="Pfam" id="PF00814">
    <property type="entry name" value="TsaD"/>
    <property type="match status" value="1"/>
</dbReference>
<dbReference type="PRINTS" id="PR00789">
    <property type="entry name" value="OSIALOPTASE"/>
</dbReference>
<dbReference type="SUPFAM" id="SSF53067">
    <property type="entry name" value="Actin-like ATPase domain"/>
    <property type="match status" value="2"/>
</dbReference>
<dbReference type="PROSITE" id="PS01016">
    <property type="entry name" value="GLYCOPROTEASE"/>
    <property type="match status" value="1"/>
</dbReference>
<keyword id="KW-0012">Acyltransferase</keyword>
<keyword id="KW-0963">Cytoplasm</keyword>
<keyword id="KW-0408">Iron</keyword>
<keyword id="KW-0479">Metal-binding</keyword>
<keyword id="KW-1185">Reference proteome</keyword>
<keyword id="KW-0808">Transferase</keyword>
<keyword id="KW-0819">tRNA processing</keyword>
<organism>
    <name type="scientific">Crocosphaera subtropica (strain ATCC 51142 / BH68)</name>
    <name type="common">Cyanothece sp. (strain ATCC 51142)</name>
    <dbReference type="NCBI Taxonomy" id="43989"/>
    <lineage>
        <taxon>Bacteria</taxon>
        <taxon>Bacillati</taxon>
        <taxon>Cyanobacteriota</taxon>
        <taxon>Cyanophyceae</taxon>
        <taxon>Oscillatoriophycideae</taxon>
        <taxon>Chroococcales</taxon>
        <taxon>Aphanothecaceae</taxon>
        <taxon>Crocosphaera</taxon>
        <taxon>Crocosphaera subtropica</taxon>
    </lineage>
</organism>
<proteinExistence type="inferred from homology"/>
<sequence length="346" mass="37306">MTTVLGIETSCDETAVAIVNNRRICSSVVASQIDLHKRYGGVVPEEASRQHLLTINPCIEQALQTAKLTWNDIDGIAATVAPGLIGALMVGETAAKTLAMIHHKPFLGIHHLEGHIYATYLSEPDWKPPFLCLLVSGGHTSLIHVKDCGVYEQLGTTRDDAAGEAFDKVARLLNLGYPGGPIIDQLATQGNPKRFNLPEGKVSLPQGGYHPYDSSFSGLKTAVLRLVEKLKQEKTEPLPIADLAASFQETVARSLTKKTITCALDHHISHIAVGGGVAANSGLRNHLQEAAKKRNLTVHFPPLKLCTDNAAMIACAACDHLKKGHISSWNLGVQSRLPITEVMTLY</sequence>
<name>TSAD_CROS5</name>
<gene>
    <name evidence="1" type="primary">tsaD</name>
    <name type="synonym">gcp</name>
    <name type="ordered locus">cce_0208</name>
</gene>
<accession>B1X058</accession>
<protein>
    <recommendedName>
        <fullName evidence="1">tRNA N6-adenosine threonylcarbamoyltransferase</fullName>
        <ecNumber evidence="1">2.3.1.234</ecNumber>
    </recommendedName>
    <alternativeName>
        <fullName evidence="1">N6-L-threonylcarbamoyladenine synthase</fullName>
        <shortName evidence="1">t(6)A synthase</shortName>
    </alternativeName>
    <alternativeName>
        <fullName evidence="1">t(6)A37 threonylcarbamoyladenosine biosynthesis protein TsaD</fullName>
    </alternativeName>
    <alternativeName>
        <fullName evidence="1">tRNA threonylcarbamoyladenosine biosynthesis protein TsaD</fullName>
    </alternativeName>
</protein>